<sequence length="309" mass="33949">MGNAWSLISQMFPPKPKWSVNDIPDLTGKVVIVTGGNTGCGKETVKALLAHGAKVYLAARSEEKAKEAITKLKEETGAEAIFLSLDLADLVSVRRGAEEFLSKEKQLHILFNNAGVMLAPMDMLTKQGYDLQFGTNVIGHFHFTQLLLPALLAAATPTEKARVITTSSSANYMGTLDFNVWKDSPARSKKASGDLYVQSKHGNVVFAVELARRYGEQNIISHSLNPGSIRTDLQRHLSPFANKMQDVFLFPADMGALTQLWAGTSPEAGKLNGEFMIPWARLGKARKETGDPAVGKKLWEWLELQCKDY</sequence>
<reference key="1">
    <citation type="journal article" date="2017" name="Nat. Ecol. Evol.">
        <title>Genome expansion and lineage-specific genetic innovations in the forest pathogenic fungi Armillaria.</title>
        <authorList>
            <person name="Sipos G."/>
            <person name="Prasanna A.N."/>
            <person name="Walter M.C."/>
            <person name="O'Connor E."/>
            <person name="Balint B."/>
            <person name="Krizsan K."/>
            <person name="Kiss B."/>
            <person name="Hess J."/>
            <person name="Varga T."/>
            <person name="Slot J."/>
            <person name="Riley R."/>
            <person name="Boka B."/>
            <person name="Rigling D."/>
            <person name="Barry K."/>
            <person name="Lee J."/>
            <person name="Mihaltcheva S."/>
            <person name="LaButti K."/>
            <person name="Lipzen A."/>
            <person name="Waldron R."/>
            <person name="Moloney N.M."/>
            <person name="Sperisen C."/>
            <person name="Kredics L."/>
            <person name="Vagvoelgyi C."/>
            <person name="Patrignani A."/>
            <person name="Fitzpatrick D."/>
            <person name="Nagy I."/>
            <person name="Doyle S."/>
            <person name="Anderson J.B."/>
            <person name="Grigoriev I.V."/>
            <person name="Gueldener U."/>
            <person name="Muensterkoetter M."/>
            <person name="Nagy L.G."/>
        </authorList>
    </citation>
    <scope>NUCLEOTIDE SEQUENCE [LARGE SCALE GENOMIC DNA]</scope>
    <source>
        <strain>Ar21-2</strain>
    </source>
</reference>
<reference key="2">
    <citation type="journal article" date="2011" name="Bioorg. Med. Chem. Lett.">
        <title>In vitro cytotoxicity of melleolide antibiotics: structural and mechanistic aspects.</title>
        <authorList>
            <person name="Bohnert M."/>
            <person name="Miethbauer S."/>
            <person name="Dahse H.M."/>
            <person name="Ziemen J."/>
            <person name="Nett M."/>
            <person name="Hoffmeister D."/>
        </authorList>
    </citation>
    <scope>BIOTECHNOLOGY</scope>
</reference>
<reference key="3">
    <citation type="journal article" date="2011" name="J. Biol. Chem.">
        <title>Cloning and characterization of an Armillaria gallica cDNA encoding protoilludene synthase, which catalyzes the first committed step in the synthesis of antimicrobial melleolides.</title>
        <authorList>
            <person name="Engels B."/>
            <person name="Heinig U."/>
            <person name="Grothe T."/>
            <person name="Stadler M."/>
            <person name="Jennewein S."/>
        </authorList>
    </citation>
    <scope>FUNCTION</scope>
    <source>
        <strain>FU02472</strain>
    </source>
</reference>
<reference key="4">
    <citation type="journal article" date="2013" name="Evid. Based Complement Alternat. Med.">
        <title>Therapeutic and radiosensitizing effects of armillaridin on human esophageal cancer cells.</title>
        <authorList>
            <person name="Chi C.W."/>
            <person name="Chen C.C."/>
            <person name="Chen Y.J."/>
        </authorList>
    </citation>
    <scope>BIOTECHNOLOGY</scope>
</reference>
<reference key="5">
    <citation type="journal article" date="2015" name="Int. J. Med. Mushrooms">
        <title>Armillaridin, a honey medicinal mushroom, Armillaria mellea (higher basidiomycetes) component, inhibits differentiation and activation of human macrophages.</title>
        <authorList>
            <person name="Liu T.P."/>
            <person name="Chen C.C."/>
            <person name="Shiao P.Y."/>
            <person name="Shieh H.R."/>
            <person name="Chen Y.Y."/>
            <person name="Chen Y.J."/>
        </authorList>
    </citation>
    <scope>BIOTECHNOLOGY</scope>
</reference>
<reference key="6">
    <citation type="journal article" date="2016" name="J. Ethnopharmacol.">
        <title>Structure, cytotoxic activity and mechanism of protoilludane sesquiterpene aryl esters from the mycelium of Armillaria mellea.</title>
        <authorList>
            <person name="Li Z."/>
            <person name="Wang Y."/>
            <person name="Jiang B."/>
            <person name="Li W."/>
            <person name="Zheng L."/>
            <person name="Yang X."/>
            <person name="Bao Y."/>
            <person name="Sun L."/>
            <person name="Huang Y."/>
            <person name="Li Y."/>
        </authorList>
    </citation>
    <scope>BIOTECHNOLOGY</scope>
</reference>
<reference key="7">
    <citation type="journal article" date="2016" name="Tumor Biol.">
        <title>Armillaridin induces autophagy-associated cell death in human chronic myelogenous leukemia K562 cells.</title>
        <authorList>
            <person name="Chang W.H."/>
            <person name="Huang H.L."/>
            <person name="Huang W.P."/>
            <person name="Chen C.C."/>
            <person name="Chen Y.J."/>
        </authorList>
    </citation>
    <scope>BIOTECHNOLOGY</scope>
</reference>
<reference key="8">
    <citation type="journal article" date="2018" name="Curr. Biol.">
        <title>Armillaria.</title>
        <authorList>
            <person name="Sipos G."/>
            <person name="Anderson J.B."/>
            <person name="Nagy L.G."/>
        </authorList>
    </citation>
    <scope>MISCELLANEOUS</scope>
</reference>
<reference key="9">
    <citation type="journal article" date="2018" name="Proc. R. Soc. B">
        <title>Clonal evolution and genome stability in a 2500-year-old fungal individual.</title>
        <authorList>
            <person name="Anderson J.B."/>
            <person name="Bruhn J.N."/>
            <person name="Kasimer D."/>
            <person name="Wang H."/>
            <person name="Rodrigue N."/>
            <person name="Smith M.L."/>
        </authorList>
    </citation>
    <scope>MISCELLANEOUS</scope>
</reference>
<reference key="10">
    <citation type="journal article" date="2019" name="Am. J. Chin. Med.">
        <title>Induction of autophagic death of human hepatocellular carcinoma cells by armillaridin from Armillaria mellea.</title>
        <authorList>
            <person name="Leu Y.S."/>
            <person name="Chen Y.J."/>
            <person name="Chen C.C."/>
            <person name="Huang H.L."/>
        </authorList>
    </citation>
    <scope>BIOTECHNOLOGY</scope>
</reference>
<reference key="11">
    <citation type="journal article" date="2020" name="Plant Dis.">
        <title>Susceptibility of garden trees and shrubs to Armillaria root rot.</title>
        <authorList>
            <person name="Cromey M.G."/>
            <person name="Drakulic J."/>
            <person name="Beal E.J."/>
            <person name="Waghorn I.A.G."/>
            <person name="Perry J.N."/>
            <person name="Clover G.R.G."/>
        </authorList>
    </citation>
    <scope>MISCELLANEOUS</scope>
</reference>
<keyword id="KW-0521">NADP</keyword>
<keyword id="KW-0560">Oxidoreductase</keyword>
<keyword id="KW-1185">Reference proteome</keyword>
<name>ARMD1_ARMGA</name>
<dbReference type="EC" id="1.1.1.-" evidence="5"/>
<dbReference type="EMBL" id="KZ293696">
    <property type="protein sequence ID" value="PBK84763.1"/>
    <property type="molecule type" value="Genomic_DNA"/>
</dbReference>
<dbReference type="SMR" id="A0A2H3D905"/>
<dbReference type="FunCoup" id="A0A2H3D905">
    <property type="interactions" value="174"/>
</dbReference>
<dbReference type="STRING" id="47427.A0A2H3D905"/>
<dbReference type="InParanoid" id="A0A2H3D905"/>
<dbReference type="OMA" id="SDCKKTW"/>
<dbReference type="OrthoDB" id="191139at2759"/>
<dbReference type="Proteomes" id="UP000217790">
    <property type="component" value="Unassembled WGS sequence"/>
</dbReference>
<dbReference type="GO" id="GO:0016491">
    <property type="term" value="F:oxidoreductase activity"/>
    <property type="evidence" value="ECO:0007669"/>
    <property type="project" value="UniProtKB-KW"/>
</dbReference>
<dbReference type="Gene3D" id="3.40.50.720">
    <property type="entry name" value="NAD(P)-binding Rossmann-like Domain"/>
    <property type="match status" value="1"/>
</dbReference>
<dbReference type="InterPro" id="IPR036291">
    <property type="entry name" value="NAD(P)-bd_dom_sf"/>
</dbReference>
<dbReference type="InterPro" id="IPR002347">
    <property type="entry name" value="SDR_fam"/>
</dbReference>
<dbReference type="PANTHER" id="PTHR24320">
    <property type="entry name" value="RETINOL DEHYDROGENASE"/>
    <property type="match status" value="1"/>
</dbReference>
<dbReference type="PANTHER" id="PTHR24320:SF236">
    <property type="entry name" value="SHORT-CHAIN DEHYDROGENASE-RELATED"/>
    <property type="match status" value="1"/>
</dbReference>
<dbReference type="Pfam" id="PF00106">
    <property type="entry name" value="adh_short"/>
    <property type="match status" value="1"/>
</dbReference>
<dbReference type="PRINTS" id="PR00081">
    <property type="entry name" value="GDHRDH"/>
</dbReference>
<dbReference type="SUPFAM" id="SSF51735">
    <property type="entry name" value="NAD(P)-binding Rossmann-fold domains"/>
    <property type="match status" value="1"/>
</dbReference>
<organism>
    <name type="scientific">Armillaria gallica</name>
    <name type="common">Bulbous honey fungus</name>
    <name type="synonym">Armillaria bulbosa</name>
    <dbReference type="NCBI Taxonomy" id="47427"/>
    <lineage>
        <taxon>Eukaryota</taxon>
        <taxon>Fungi</taxon>
        <taxon>Dikarya</taxon>
        <taxon>Basidiomycota</taxon>
        <taxon>Agaricomycotina</taxon>
        <taxon>Agaricomycetes</taxon>
        <taxon>Agaricomycetidae</taxon>
        <taxon>Agaricales</taxon>
        <taxon>Marasmiineae</taxon>
        <taxon>Physalacriaceae</taxon>
        <taxon>Armillaria</taxon>
    </lineage>
</organism>
<gene>
    <name type="ORF">ARMGADRAFT_1018437</name>
</gene>
<evidence type="ECO:0000250" key="1">
    <source>
        <dbReference type="UniProtKB" id="I3ZNU9"/>
    </source>
</evidence>
<evidence type="ECO:0000250" key="2">
    <source>
        <dbReference type="UniProtKB" id="L0E2Z4"/>
    </source>
</evidence>
<evidence type="ECO:0000250" key="3">
    <source>
        <dbReference type="UniProtKB" id="O93868"/>
    </source>
</evidence>
<evidence type="ECO:0000255" key="4">
    <source>
        <dbReference type="PROSITE-ProRule" id="PRU10001"/>
    </source>
</evidence>
<evidence type="ECO:0000269" key="5">
    <source>
    </source>
</evidence>
<evidence type="ECO:0000269" key="6">
    <source>
    </source>
</evidence>
<evidence type="ECO:0000269" key="7">
    <source>
    </source>
</evidence>
<evidence type="ECO:0000269" key="8">
    <source>
    </source>
</evidence>
<evidence type="ECO:0000269" key="9">
    <source>
    </source>
</evidence>
<evidence type="ECO:0000269" key="10">
    <source>
    </source>
</evidence>
<evidence type="ECO:0000269" key="11">
    <source>
    </source>
</evidence>
<evidence type="ECO:0000269" key="12">
    <source>
    </source>
</evidence>
<evidence type="ECO:0000269" key="13">
    <source>
    </source>
</evidence>
<evidence type="ECO:0000303" key="14">
    <source>
    </source>
</evidence>
<evidence type="ECO:0000305" key="15"/>
<evidence type="ECO:0000305" key="16">
    <source>
    </source>
</evidence>
<comment type="function">
    <text evidence="1 5 15">Short-chain dehydrogenase/reductase, part of the gene cluster that mediates the biosynthesis of melleolides, a range of antifungal and phytotoxic polyketide derivatives composed of an orsellinic acid (OA) moiety esterified to various sesquiterpene alcohols (Probable). The first step in melleolides biosynthesis is performed by the delta(6)-protoilludene synthase PRO1 which catalyzes the cyclization of farnesyl diphosphate to protoilludene (PubMed:21148562). The orsellinic acid synthase armB produces OA by condensing acetyl-CoA with 3 malonyl-CoA units in a three-round chain elongation reaction folowed by a C2-C7 ring closure (By similarity). ArmB further catalyzes the trans-esterification of OA to the various sesquiterpene alcohols resulting from the hydroxylation of protoilludene (By similarity). The melleolides cluster also includes 5 cytochrome P450 monooxygenases, 4 NAD(+)-dependent oxidoreductases, one flavin-dependent oxidoreductase, and one O-methyltransferase (By similarity). The cytochrome P450 monooxygenases may be involved in protoilludene hydroxylation to elaborate melleolides with multiple alcohol groups, such as melleolide D, which carries alcohol functionalities at C-4, C-5, C-10, and C-13 (By similarity). The role of the NAD(+)-dependent enzymes remains unknown (By similarity). Numerous melleolides, including arnamial, show 5'-O-methylation of the aromatic moiety which may be catalyzed by the methyltransferase encoded in the cluster (By similarity). The flavin-dependent oxidoreductase might represent the dehydrogenase yielding the aldehyde in position 1 of arnamial and other melleolides (By similarity). Finally, several halogenase localized outside of the cluster, are able to catalyze the transfer of a single chlorine atom to the melleolide backbone, resulting in a 6'-chloromelleolide product (By similarity).</text>
</comment>
<comment type="pathway">
    <text evidence="15">Secondary metabolite biosynthesis.</text>
</comment>
<comment type="biotechnology">
    <text evidence="6 7 8 9 10 12">Melleolide sesquiterpene aryl esters are cytotoxic secondary products with anti-cancer potential (PubMed:21376582, PubMed:26952552). Armillaridin shows therapeutic and radiosensitizing effects on human esophageal cancer cells (PubMed:23864890). Armillaridin induces autophagy-associated cell death in human chronic myelogenous leukemia as well as of hepatocellular carcinoma cells (PubMed:27592257, PubMed:31488037). Armillaridin can also inhibit the differentiation and activation of human macrophages and thus might have potential to be developed as a biological response modifier for inflammatory diseases (PubMed:25746621).</text>
</comment>
<comment type="miscellaneous">
    <text evidence="11 13 16">Armillaria species are both devastating forest pathogens and some of the largest and oldest terrestrial organisms on Earth (Probable) (PubMed:31746694). They forage for hosts and achieve immense colony sizes via rhizomorphs, root-like multicellular structures of clonal dispersal (Probable). One genetic Armillaria gallica individual localized in Michigan's Upper Peninsula stands out as exceptionally large, covering hundreds of tree root systems over approximately 75 hectares of the forest floor (PubMed:30963893). Based on observed growth rates of the fungus, the minimum age of this large individual can be estimated as 2500 years (PubMed:30963893).</text>
</comment>
<comment type="similarity">
    <text evidence="15">Belongs to the short-chain dehydrogenases/reductases (SDR) family.</text>
</comment>
<protein>
    <recommendedName>
        <fullName evidence="14">Short-chain dehydrogenase/reductase ARMGADRAFT_1018437</fullName>
        <ecNumber evidence="5">1.1.1.-</ecNumber>
    </recommendedName>
    <alternativeName>
        <fullName>Melleolides biosynthesis cluster protein ARMGADRAFT_1018437</fullName>
    </alternativeName>
</protein>
<feature type="chain" id="PRO_0000449403" description="Short-chain dehydrogenase/reductase ARMGADRAFT_1018437">
    <location>
        <begin position="1"/>
        <end position="309"/>
    </location>
</feature>
<feature type="active site" description="Proton donor" evidence="3">
    <location>
        <position position="167"/>
    </location>
</feature>
<feature type="active site" description="Proton acceptor" evidence="4">
    <location>
        <position position="196"/>
    </location>
</feature>
<feature type="active site" description="Lowers pKa of active site Tyr" evidence="3">
    <location>
        <position position="200"/>
    </location>
</feature>
<feature type="binding site" evidence="2">
    <location>
        <position position="64"/>
    </location>
    <ligand>
        <name>NADP(+)</name>
        <dbReference type="ChEBI" id="CHEBI:58349"/>
    </ligand>
</feature>
<feature type="binding site" evidence="2">
    <location>
        <position position="86"/>
    </location>
    <ligand>
        <name>NADP(+)</name>
        <dbReference type="ChEBI" id="CHEBI:58349"/>
    </ligand>
</feature>
<feature type="binding site" evidence="3">
    <location>
        <position position="113"/>
    </location>
    <ligand>
        <name>NADP(+)</name>
        <dbReference type="ChEBI" id="CHEBI:58349"/>
    </ligand>
</feature>
<feature type="binding site" evidence="3">
    <location>
        <position position="196"/>
    </location>
    <ligand>
        <name>NADP(+)</name>
        <dbReference type="ChEBI" id="CHEBI:58349"/>
    </ligand>
</feature>
<feature type="binding site" evidence="3">
    <location>
        <position position="200"/>
    </location>
    <ligand>
        <name>NADP(+)</name>
        <dbReference type="ChEBI" id="CHEBI:58349"/>
    </ligand>
</feature>
<accession>A0A2H3D905</accession>
<proteinExistence type="evidence at protein level"/>